<name>RFX1L_DANRE</name>
<gene>
    <name type="primary">rbfox1l</name>
    <name type="synonym">a2bp1l</name>
    <name type="synonym">fox1</name>
    <name type="synonym">fox1l</name>
    <name type="ORF">si:ch211-57k11.1</name>
</gene>
<proteinExistence type="evidence at protein level"/>
<keyword id="KW-0507">mRNA processing</keyword>
<keyword id="KW-0508">mRNA splicing</keyword>
<keyword id="KW-0539">Nucleus</keyword>
<keyword id="KW-1185">Reference proteome</keyword>
<keyword id="KW-0694">RNA-binding</keyword>
<dbReference type="EMBL" id="AB074763">
    <property type="protein sequence ID" value="BAC65158.1"/>
    <property type="molecule type" value="mRNA"/>
</dbReference>
<dbReference type="EMBL" id="BX511250">
    <property type="protein sequence ID" value="CAM56520.1"/>
    <property type="molecule type" value="Genomic_DNA"/>
</dbReference>
<dbReference type="RefSeq" id="NP_999940.1">
    <property type="nucleotide sequence ID" value="NM_214775.1"/>
</dbReference>
<dbReference type="SMR" id="Q7ZT82"/>
<dbReference type="BioGRID" id="91411">
    <property type="interactions" value="1"/>
</dbReference>
<dbReference type="FunCoup" id="Q7ZT82">
    <property type="interactions" value="4"/>
</dbReference>
<dbReference type="STRING" id="7955.ENSDARP00000016637"/>
<dbReference type="PaxDb" id="7955-ENSDARP00000016637"/>
<dbReference type="Ensembl" id="ENSDART00000027364">
    <property type="protein sequence ID" value="ENSDARP00000016637"/>
    <property type="gene ID" value="ENSDARG00000021184"/>
</dbReference>
<dbReference type="GeneID" id="407613"/>
<dbReference type="KEGG" id="dre:407613"/>
<dbReference type="AGR" id="ZFIN:ZDB-GENE-040923-2"/>
<dbReference type="CTD" id="407613"/>
<dbReference type="ZFIN" id="ZDB-GENE-040923-2">
    <property type="gene designation" value="rbfox1l"/>
</dbReference>
<dbReference type="eggNOG" id="KOG0125">
    <property type="taxonomic scope" value="Eukaryota"/>
</dbReference>
<dbReference type="HOGENOM" id="CLU_048440_0_0_1"/>
<dbReference type="InParanoid" id="Q7ZT82"/>
<dbReference type="OMA" id="KPQTPLM"/>
<dbReference type="OrthoDB" id="5382468at2759"/>
<dbReference type="PhylomeDB" id="Q7ZT82"/>
<dbReference type="TreeFam" id="TF315942"/>
<dbReference type="PRO" id="PR:Q7ZT82"/>
<dbReference type="Proteomes" id="UP000000437">
    <property type="component" value="Alternate scaffold 16"/>
</dbReference>
<dbReference type="Proteomes" id="UP000000437">
    <property type="component" value="Chromosome 16"/>
</dbReference>
<dbReference type="Bgee" id="ENSDARG00000021184">
    <property type="expression patterns" value="Expressed in muscle tissue and 19 other cell types or tissues"/>
</dbReference>
<dbReference type="ExpressionAtlas" id="Q7ZT82">
    <property type="expression patterns" value="baseline and differential"/>
</dbReference>
<dbReference type="GO" id="GO:0005737">
    <property type="term" value="C:cytoplasm"/>
    <property type="evidence" value="ECO:0000318"/>
    <property type="project" value="GO_Central"/>
</dbReference>
<dbReference type="GO" id="GO:0005634">
    <property type="term" value="C:nucleus"/>
    <property type="evidence" value="ECO:0000314"/>
    <property type="project" value="ZFIN"/>
</dbReference>
<dbReference type="GO" id="GO:0003729">
    <property type="term" value="F:mRNA binding"/>
    <property type="evidence" value="ECO:0000318"/>
    <property type="project" value="GO_Central"/>
</dbReference>
<dbReference type="GO" id="GO:0003723">
    <property type="term" value="F:RNA binding"/>
    <property type="evidence" value="ECO:0000314"/>
    <property type="project" value="ZFIN"/>
</dbReference>
<dbReference type="GO" id="GO:0055013">
    <property type="term" value="P:cardiac muscle cell development"/>
    <property type="evidence" value="ECO:0000316"/>
    <property type="project" value="ZFIN"/>
</dbReference>
<dbReference type="GO" id="GO:0003015">
    <property type="term" value="P:heart process"/>
    <property type="evidence" value="ECO:0000315"/>
    <property type="project" value="ZFIN"/>
</dbReference>
<dbReference type="GO" id="GO:0006397">
    <property type="term" value="P:mRNA processing"/>
    <property type="evidence" value="ECO:0007669"/>
    <property type="project" value="UniProtKB-KW"/>
</dbReference>
<dbReference type="GO" id="GO:0007399">
    <property type="term" value="P:nervous system development"/>
    <property type="evidence" value="ECO:0000318"/>
    <property type="project" value="GO_Central"/>
</dbReference>
<dbReference type="GO" id="GO:0000381">
    <property type="term" value="P:regulation of alternative mRNA splicing, via spliceosome"/>
    <property type="evidence" value="ECO:0000318"/>
    <property type="project" value="GO_Central"/>
</dbReference>
<dbReference type="GO" id="GO:0043484">
    <property type="term" value="P:regulation of RNA splicing"/>
    <property type="evidence" value="ECO:0000314"/>
    <property type="project" value="ZFIN"/>
</dbReference>
<dbReference type="GO" id="GO:0008380">
    <property type="term" value="P:RNA splicing"/>
    <property type="evidence" value="ECO:0000314"/>
    <property type="project" value="ZFIN"/>
</dbReference>
<dbReference type="GO" id="GO:0048741">
    <property type="term" value="P:skeletal muscle fiber development"/>
    <property type="evidence" value="ECO:0000316"/>
    <property type="project" value="ZFIN"/>
</dbReference>
<dbReference type="CDD" id="cd12407">
    <property type="entry name" value="RRM_FOX1_like"/>
    <property type="match status" value="1"/>
</dbReference>
<dbReference type="FunFam" id="3.30.70.330:FF:000004">
    <property type="entry name" value="RNA binding fox-1 homolog 1"/>
    <property type="match status" value="1"/>
</dbReference>
<dbReference type="Gene3D" id="3.30.70.330">
    <property type="match status" value="1"/>
</dbReference>
<dbReference type="InterPro" id="IPR025670">
    <property type="entry name" value="Fox-1_C_dom"/>
</dbReference>
<dbReference type="InterPro" id="IPR034237">
    <property type="entry name" value="FOX1_RRM"/>
</dbReference>
<dbReference type="InterPro" id="IPR012677">
    <property type="entry name" value="Nucleotide-bd_a/b_plait_sf"/>
</dbReference>
<dbReference type="InterPro" id="IPR035979">
    <property type="entry name" value="RBD_domain_sf"/>
</dbReference>
<dbReference type="InterPro" id="IPR017325">
    <property type="entry name" value="RBFOX1-3"/>
</dbReference>
<dbReference type="InterPro" id="IPR047131">
    <property type="entry name" value="RBFOX1-like"/>
</dbReference>
<dbReference type="InterPro" id="IPR000504">
    <property type="entry name" value="RRM_dom"/>
</dbReference>
<dbReference type="PANTHER" id="PTHR15597">
    <property type="entry name" value="ATAXIN 2-BINDING PROTEIN 1-RELATED"/>
    <property type="match status" value="1"/>
</dbReference>
<dbReference type="PANTHER" id="PTHR15597:SF40">
    <property type="entry name" value="RNA BINDING PROTEIN FOX-1 HOMOLOG 1-LIKE"/>
    <property type="match status" value="1"/>
</dbReference>
<dbReference type="Pfam" id="PF12414">
    <property type="entry name" value="Fox-1_C"/>
    <property type="match status" value="1"/>
</dbReference>
<dbReference type="Pfam" id="PF00076">
    <property type="entry name" value="RRM_1"/>
    <property type="match status" value="1"/>
</dbReference>
<dbReference type="PIRSF" id="PIRSF037932">
    <property type="entry name" value="Ataxin_2_bd_A2BP"/>
    <property type="match status" value="1"/>
</dbReference>
<dbReference type="SMART" id="SM00360">
    <property type="entry name" value="RRM"/>
    <property type="match status" value="1"/>
</dbReference>
<dbReference type="SUPFAM" id="SSF54928">
    <property type="entry name" value="RNA-binding domain, RBD"/>
    <property type="match status" value="1"/>
</dbReference>
<dbReference type="PROSITE" id="PS50102">
    <property type="entry name" value="RRM"/>
    <property type="match status" value="1"/>
</dbReference>
<comment type="function">
    <text evidence="4">RNA-binding protein that regulates alternative splicing events by binding to 5'-GCAUG-3' elements. Regulates alternative splicing of tissue-specific exons.</text>
</comment>
<comment type="subcellular location">
    <subcellularLocation>
        <location evidence="4">Nucleus</location>
    </subcellularLocation>
</comment>
<comment type="tissue specificity">
    <text evidence="4">Expressed during muscle development in adaxial cells, somites, cardiac precursors, finbuds and jaw muscle cells.</text>
</comment>
<evidence type="ECO:0000250" key="1"/>
<evidence type="ECO:0000255" key="2">
    <source>
        <dbReference type="PROSITE-ProRule" id="PRU00176"/>
    </source>
</evidence>
<evidence type="ECO:0000256" key="3">
    <source>
        <dbReference type="SAM" id="MobiDB-lite"/>
    </source>
</evidence>
<evidence type="ECO:0000269" key="4">
    <source>
    </source>
</evidence>
<accession>Q7ZT82</accession>
<organism>
    <name type="scientific">Danio rerio</name>
    <name type="common">Zebrafish</name>
    <name type="synonym">Brachydanio rerio</name>
    <dbReference type="NCBI Taxonomy" id="7955"/>
    <lineage>
        <taxon>Eukaryota</taxon>
        <taxon>Metazoa</taxon>
        <taxon>Chordata</taxon>
        <taxon>Craniata</taxon>
        <taxon>Vertebrata</taxon>
        <taxon>Euteleostomi</taxon>
        <taxon>Actinopterygii</taxon>
        <taxon>Neopterygii</taxon>
        <taxon>Teleostei</taxon>
        <taxon>Ostariophysi</taxon>
        <taxon>Cypriniformes</taxon>
        <taxon>Danionidae</taxon>
        <taxon>Danioninae</taxon>
        <taxon>Danio</taxon>
    </lineage>
</organism>
<feature type="chain" id="PRO_0000317113" description="RNA binding protein fox-1 homolog 1-like">
    <location>
        <begin position="1"/>
        <end position="382"/>
    </location>
</feature>
<feature type="domain" description="RRM" evidence="2">
    <location>
        <begin position="147"/>
        <end position="223"/>
    </location>
</feature>
<feature type="region of interest" description="Disordered" evidence="3">
    <location>
        <begin position="34"/>
        <end position="79"/>
    </location>
</feature>
<feature type="region of interest" description="Disordered" evidence="3">
    <location>
        <begin position="94"/>
        <end position="148"/>
    </location>
</feature>
<feature type="compositionally biased region" description="Pro residues" evidence="3">
    <location>
        <begin position="49"/>
        <end position="65"/>
    </location>
</feature>
<feature type="compositionally biased region" description="Polar residues" evidence="3">
    <location>
        <begin position="101"/>
        <end position="110"/>
    </location>
</feature>
<feature type="site" description="Interaction with RNA" evidence="1">
    <location>
        <position position="148"/>
    </location>
</feature>
<feature type="site" description="Interaction with RNA" evidence="1">
    <location>
        <position position="156"/>
    </location>
</feature>
<feature type="site" description="Interaction with RNA" evidence="1">
    <location>
        <position position="157"/>
    </location>
</feature>
<feature type="site" description="Interaction with RNA" evidence="1">
    <location>
        <position position="181"/>
    </location>
</feature>
<feature type="site" description="Interaction with RNA" evidence="1">
    <location>
        <position position="186"/>
    </location>
</feature>
<feature type="site" description="Interaction with RNA" evidence="1">
    <location>
        <position position="190"/>
    </location>
</feature>
<feature type="site" description="Interaction with RNA" evidence="1">
    <location>
        <position position="214"/>
    </location>
</feature>
<feature type="site" description="Interaction with RNA" evidence="1">
    <location>
        <position position="224"/>
    </location>
</feature>
<feature type="mutagenesis site" description="Loss of RNA binding." evidence="4">
    <original>F</original>
    <variation>A</variation>
    <location>
        <position position="190"/>
    </location>
</feature>
<sequence>MLSSPTVILQPYGLPVYPQTASCYPGIVQGAAAQEAGPGNGDPSLPQVYAPPPSYPPPGQAPPTPAARLPPLDFSAAHPNSEYADHHQLRVYQGPQHDGTESITASNTDDSLAPVTSDPQSLSVSVASGSGAAGGSDEEGGGKAQPKRLHVSNIPFRFRDPDLRQMFGQFGKILDVEIIFNERGSKGFGFVTFESAVEADRAREKLNGTIVEGRKIEVNNATARVVTKKPQTPLVNAAGWKINPVMGAMYAPELYTVASFPYPVPTPTLAYRGSGLRGRGRAVYNTIRSAAAAATPAAVPAYPGVVYQEGLYGAEVYGGYPATYRVAQSASAAATATYSDGYGRVYATATDPYHHSVGPTTTYGVGTMASLYRGGYNRFTPY</sequence>
<reference key="1">
    <citation type="journal article" date="2003" name="EMBO J.">
        <title>A vertebrate RNA-binding protein Fox-1 regulates tissue-specific splicing via the pentanucleotide GCAUG.</title>
        <authorList>
            <person name="Jin Y."/>
            <person name="Suzuki H."/>
            <person name="Maegawa S."/>
            <person name="Endo H."/>
            <person name="Sugano S."/>
            <person name="Hashimoto K."/>
            <person name="Yasuda K."/>
            <person name="Inoue K."/>
        </authorList>
    </citation>
    <scope>FUNCTION</scope>
    <scope>SUBCELLULAR LOCATION</scope>
    <scope>MUTAGENESIS OF PHE-190</scope>
    <scope>TISSUE SPECIFICITY</scope>
</reference>
<reference key="2">
    <citation type="journal article" date="2013" name="Nature">
        <title>The zebrafish reference genome sequence and its relationship to the human genome.</title>
        <authorList>
            <person name="Howe K."/>
            <person name="Clark M.D."/>
            <person name="Torroja C.F."/>
            <person name="Torrance J."/>
            <person name="Berthelot C."/>
            <person name="Muffato M."/>
            <person name="Collins J.E."/>
            <person name="Humphray S."/>
            <person name="McLaren K."/>
            <person name="Matthews L."/>
            <person name="McLaren S."/>
            <person name="Sealy I."/>
            <person name="Caccamo M."/>
            <person name="Churcher C."/>
            <person name="Scott C."/>
            <person name="Barrett J.C."/>
            <person name="Koch R."/>
            <person name="Rauch G.J."/>
            <person name="White S."/>
            <person name="Chow W."/>
            <person name="Kilian B."/>
            <person name="Quintais L.T."/>
            <person name="Guerra-Assuncao J.A."/>
            <person name="Zhou Y."/>
            <person name="Gu Y."/>
            <person name="Yen J."/>
            <person name="Vogel J.H."/>
            <person name="Eyre T."/>
            <person name="Redmond S."/>
            <person name="Banerjee R."/>
            <person name="Chi J."/>
            <person name="Fu B."/>
            <person name="Langley E."/>
            <person name="Maguire S.F."/>
            <person name="Laird G.K."/>
            <person name="Lloyd D."/>
            <person name="Kenyon E."/>
            <person name="Donaldson S."/>
            <person name="Sehra H."/>
            <person name="Almeida-King J."/>
            <person name="Loveland J."/>
            <person name="Trevanion S."/>
            <person name="Jones M."/>
            <person name="Quail M."/>
            <person name="Willey D."/>
            <person name="Hunt A."/>
            <person name="Burton J."/>
            <person name="Sims S."/>
            <person name="McLay K."/>
            <person name="Plumb B."/>
            <person name="Davis J."/>
            <person name="Clee C."/>
            <person name="Oliver K."/>
            <person name="Clark R."/>
            <person name="Riddle C."/>
            <person name="Elliot D."/>
            <person name="Threadgold G."/>
            <person name="Harden G."/>
            <person name="Ware D."/>
            <person name="Begum S."/>
            <person name="Mortimore B."/>
            <person name="Kerry G."/>
            <person name="Heath P."/>
            <person name="Phillimore B."/>
            <person name="Tracey A."/>
            <person name="Corby N."/>
            <person name="Dunn M."/>
            <person name="Johnson C."/>
            <person name="Wood J."/>
            <person name="Clark S."/>
            <person name="Pelan S."/>
            <person name="Griffiths G."/>
            <person name="Smith M."/>
            <person name="Glithero R."/>
            <person name="Howden P."/>
            <person name="Barker N."/>
            <person name="Lloyd C."/>
            <person name="Stevens C."/>
            <person name="Harley J."/>
            <person name="Holt K."/>
            <person name="Panagiotidis G."/>
            <person name="Lovell J."/>
            <person name="Beasley H."/>
            <person name="Henderson C."/>
            <person name="Gordon D."/>
            <person name="Auger K."/>
            <person name="Wright D."/>
            <person name="Collins J."/>
            <person name="Raisen C."/>
            <person name="Dyer L."/>
            <person name="Leung K."/>
            <person name="Robertson L."/>
            <person name="Ambridge K."/>
            <person name="Leongamornlert D."/>
            <person name="McGuire S."/>
            <person name="Gilderthorp R."/>
            <person name="Griffiths C."/>
            <person name="Manthravadi D."/>
            <person name="Nichol S."/>
            <person name="Barker G."/>
            <person name="Whitehead S."/>
            <person name="Kay M."/>
            <person name="Brown J."/>
            <person name="Murnane C."/>
            <person name="Gray E."/>
            <person name="Humphries M."/>
            <person name="Sycamore N."/>
            <person name="Barker D."/>
            <person name="Saunders D."/>
            <person name="Wallis J."/>
            <person name="Babbage A."/>
            <person name="Hammond S."/>
            <person name="Mashreghi-Mohammadi M."/>
            <person name="Barr L."/>
            <person name="Martin S."/>
            <person name="Wray P."/>
            <person name="Ellington A."/>
            <person name="Matthews N."/>
            <person name="Ellwood M."/>
            <person name="Woodmansey R."/>
            <person name="Clark G."/>
            <person name="Cooper J."/>
            <person name="Tromans A."/>
            <person name="Grafham D."/>
            <person name="Skuce C."/>
            <person name="Pandian R."/>
            <person name="Andrews R."/>
            <person name="Harrison E."/>
            <person name="Kimberley A."/>
            <person name="Garnett J."/>
            <person name="Fosker N."/>
            <person name="Hall R."/>
            <person name="Garner P."/>
            <person name="Kelly D."/>
            <person name="Bird C."/>
            <person name="Palmer S."/>
            <person name="Gehring I."/>
            <person name="Berger A."/>
            <person name="Dooley C.M."/>
            <person name="Ersan-Urun Z."/>
            <person name="Eser C."/>
            <person name="Geiger H."/>
            <person name="Geisler M."/>
            <person name="Karotki L."/>
            <person name="Kirn A."/>
            <person name="Konantz J."/>
            <person name="Konantz M."/>
            <person name="Oberlander M."/>
            <person name="Rudolph-Geiger S."/>
            <person name="Teucke M."/>
            <person name="Lanz C."/>
            <person name="Raddatz G."/>
            <person name="Osoegawa K."/>
            <person name="Zhu B."/>
            <person name="Rapp A."/>
            <person name="Widaa S."/>
            <person name="Langford C."/>
            <person name="Yang F."/>
            <person name="Schuster S.C."/>
            <person name="Carter N.P."/>
            <person name="Harrow J."/>
            <person name="Ning Z."/>
            <person name="Herrero J."/>
            <person name="Searle S.M."/>
            <person name="Enright A."/>
            <person name="Geisler R."/>
            <person name="Plasterk R.H."/>
            <person name="Lee C."/>
            <person name="Westerfield M."/>
            <person name="de Jong P.J."/>
            <person name="Zon L.I."/>
            <person name="Postlethwait J.H."/>
            <person name="Nusslein-Volhard C."/>
            <person name="Hubbard T.J."/>
            <person name="Roest Crollius H."/>
            <person name="Rogers J."/>
            <person name="Stemple D.L."/>
        </authorList>
    </citation>
    <scope>NUCLEOTIDE SEQUENCE [LARGE SCALE GENOMIC DNA]</scope>
    <source>
        <strain>Tuebingen</strain>
    </source>
</reference>
<protein>
    <recommendedName>
        <fullName>RNA binding protein fox-1 homolog 1-like</fullName>
    </recommendedName>
    <alternativeName>
        <fullName>Ataxin 2-binding protein 1-like</fullName>
    </alternativeName>
    <alternativeName>
        <fullName>Fox-1 homolog-like protein 1</fullName>
    </alternativeName>
</protein>